<keyword id="KW-0997">Cell inner membrane</keyword>
<keyword id="KW-1003">Cell membrane</keyword>
<keyword id="KW-0472">Membrane</keyword>
<keyword id="KW-0520">NAD</keyword>
<keyword id="KW-0521">NADP</keyword>
<keyword id="KW-1185">Reference proteome</keyword>
<keyword id="KW-1278">Translocase</keyword>
<keyword id="KW-0812">Transmembrane</keyword>
<keyword id="KW-1133">Transmembrane helix</keyword>
<protein>
    <recommendedName>
        <fullName>NAD(P) transhydrogenase subunit beta</fullName>
        <ecNumber>7.1.1.1</ecNumber>
    </recommendedName>
    <alternativeName>
        <fullName>Nicotinamide nucleotide transhydrogenase subunit beta</fullName>
    </alternativeName>
    <alternativeName>
        <fullName>Pyridine nucleotide transhydrogenase subunit beta</fullName>
    </alternativeName>
</protein>
<gene>
    <name type="primary">pntB</name>
    <name type="ordered locus">SF1623</name>
    <name type="ordered locus">S1755</name>
</gene>
<comment type="function">
    <text evidence="1">The transhydrogenation between NADH and NADP is coupled to respiration and ATP hydrolysis and functions as a proton pump across the membrane.</text>
</comment>
<comment type="catalytic activity">
    <reaction>
        <text>NAD(+) + NADPH + H(+)(in) = NADH + NADP(+) + H(+)(out)</text>
        <dbReference type="Rhea" id="RHEA:47992"/>
        <dbReference type="ChEBI" id="CHEBI:15378"/>
        <dbReference type="ChEBI" id="CHEBI:57540"/>
        <dbReference type="ChEBI" id="CHEBI:57783"/>
        <dbReference type="ChEBI" id="CHEBI:57945"/>
        <dbReference type="ChEBI" id="CHEBI:58349"/>
        <dbReference type="EC" id="7.1.1.1"/>
    </reaction>
</comment>
<comment type="subunit">
    <text evidence="1">Heterodimer of an alpha and a beta chain.</text>
</comment>
<comment type="subcellular location">
    <subcellularLocation>
        <location evidence="1">Cell inner membrane</location>
        <topology evidence="1">Multi-pass membrane protein</topology>
    </subcellularLocation>
</comment>
<comment type="similarity">
    <text evidence="3">Belongs to the PNT beta subunit family.</text>
</comment>
<dbReference type="EC" id="7.1.1.1"/>
<dbReference type="EMBL" id="AE005674">
    <property type="protein sequence ID" value="AAN43206.1"/>
    <property type="molecule type" value="Genomic_DNA"/>
</dbReference>
<dbReference type="EMBL" id="AE014073">
    <property type="protein sequence ID" value="AAP17094.1"/>
    <property type="molecule type" value="Genomic_DNA"/>
</dbReference>
<dbReference type="RefSeq" id="NP_707499.1">
    <property type="nucleotide sequence ID" value="NC_004337.2"/>
</dbReference>
<dbReference type="RefSeq" id="WP_000014036.1">
    <property type="nucleotide sequence ID" value="NZ_WPGW01000024.1"/>
</dbReference>
<dbReference type="BMRB" id="P0AB70"/>
<dbReference type="SMR" id="P0AB70"/>
<dbReference type="STRING" id="198214.SF1623"/>
<dbReference type="PaxDb" id="198214-SF1623"/>
<dbReference type="GeneID" id="1026430"/>
<dbReference type="GeneID" id="93775750"/>
<dbReference type="KEGG" id="sfl:SF1623"/>
<dbReference type="KEGG" id="sfx:S1755"/>
<dbReference type="PATRIC" id="fig|198214.7.peg.1917"/>
<dbReference type="HOGENOM" id="CLU_007866_4_0_6"/>
<dbReference type="Proteomes" id="UP000001006">
    <property type="component" value="Chromosome"/>
</dbReference>
<dbReference type="Proteomes" id="UP000002673">
    <property type="component" value="Chromosome"/>
</dbReference>
<dbReference type="GO" id="GO:0005886">
    <property type="term" value="C:plasma membrane"/>
    <property type="evidence" value="ECO:0007669"/>
    <property type="project" value="UniProtKB-SubCell"/>
</dbReference>
<dbReference type="GO" id="GO:0050661">
    <property type="term" value="F:NADP binding"/>
    <property type="evidence" value="ECO:0007669"/>
    <property type="project" value="InterPro"/>
</dbReference>
<dbReference type="GO" id="GO:0008750">
    <property type="term" value="F:proton-translocating NAD(P)+ transhydrogenase activity"/>
    <property type="evidence" value="ECO:0007669"/>
    <property type="project" value="UniProtKB-EC"/>
</dbReference>
<dbReference type="FunFam" id="3.40.50.1220:FF:000002">
    <property type="entry name" value="NAD(P) transhydrogenase subunit beta"/>
    <property type="match status" value="1"/>
</dbReference>
<dbReference type="Gene3D" id="3.40.50.1220">
    <property type="entry name" value="TPP-binding domain"/>
    <property type="match status" value="1"/>
</dbReference>
<dbReference type="InterPro" id="IPR029035">
    <property type="entry name" value="DHS-like_NAD/FAD-binding_dom"/>
</dbReference>
<dbReference type="InterPro" id="IPR012136">
    <property type="entry name" value="NADH_DH_b"/>
</dbReference>
<dbReference type="InterPro" id="IPR034300">
    <property type="entry name" value="PNTB-like"/>
</dbReference>
<dbReference type="NCBIfam" id="NF006974">
    <property type="entry name" value="PRK09444.1"/>
    <property type="match status" value="1"/>
</dbReference>
<dbReference type="PANTHER" id="PTHR44758">
    <property type="entry name" value="NAD(P) TRANSHYDROGENASE SUBUNIT BETA"/>
    <property type="match status" value="1"/>
</dbReference>
<dbReference type="PANTHER" id="PTHR44758:SF1">
    <property type="entry name" value="NAD(P) TRANSHYDROGENASE SUBUNIT BETA"/>
    <property type="match status" value="1"/>
</dbReference>
<dbReference type="Pfam" id="PF02233">
    <property type="entry name" value="PNTB"/>
    <property type="match status" value="1"/>
</dbReference>
<dbReference type="PIRSF" id="PIRSF000204">
    <property type="entry name" value="PNTB"/>
    <property type="match status" value="1"/>
</dbReference>
<dbReference type="SUPFAM" id="SSF52467">
    <property type="entry name" value="DHS-like NAD/FAD-binding domain"/>
    <property type="match status" value="1"/>
</dbReference>
<accession>P0AB70</accession>
<accession>P07002</accession>
<accession>P76890</accession>
<reference key="1">
    <citation type="journal article" date="2002" name="Nucleic Acids Res.">
        <title>Genome sequence of Shigella flexneri 2a: insights into pathogenicity through comparison with genomes of Escherichia coli K12 and O157.</title>
        <authorList>
            <person name="Jin Q."/>
            <person name="Yuan Z."/>
            <person name="Xu J."/>
            <person name="Wang Y."/>
            <person name="Shen Y."/>
            <person name="Lu W."/>
            <person name="Wang J."/>
            <person name="Liu H."/>
            <person name="Yang J."/>
            <person name="Yang F."/>
            <person name="Zhang X."/>
            <person name="Zhang J."/>
            <person name="Yang G."/>
            <person name="Wu H."/>
            <person name="Qu D."/>
            <person name="Dong J."/>
            <person name="Sun L."/>
            <person name="Xue Y."/>
            <person name="Zhao A."/>
            <person name="Gao Y."/>
            <person name="Zhu J."/>
            <person name="Kan B."/>
            <person name="Ding K."/>
            <person name="Chen S."/>
            <person name="Cheng H."/>
            <person name="Yao Z."/>
            <person name="He B."/>
            <person name="Chen R."/>
            <person name="Ma D."/>
            <person name="Qiang B."/>
            <person name="Wen Y."/>
            <person name="Hou Y."/>
            <person name="Yu J."/>
        </authorList>
    </citation>
    <scope>NUCLEOTIDE SEQUENCE [LARGE SCALE GENOMIC DNA]</scope>
    <source>
        <strain>301 / Serotype 2a</strain>
    </source>
</reference>
<reference key="2">
    <citation type="journal article" date="2003" name="Infect. Immun.">
        <title>Complete genome sequence and comparative genomics of Shigella flexneri serotype 2a strain 2457T.</title>
        <authorList>
            <person name="Wei J."/>
            <person name="Goldberg M.B."/>
            <person name="Burland V."/>
            <person name="Venkatesan M.M."/>
            <person name="Deng W."/>
            <person name="Fournier G."/>
            <person name="Mayhew G.F."/>
            <person name="Plunkett G. III"/>
            <person name="Rose D.J."/>
            <person name="Darling A."/>
            <person name="Mau B."/>
            <person name="Perna N.T."/>
            <person name="Payne S.M."/>
            <person name="Runyen-Janecky L.J."/>
            <person name="Zhou S."/>
            <person name="Schwartz D.C."/>
            <person name="Blattner F.R."/>
        </authorList>
    </citation>
    <scope>NUCLEOTIDE SEQUENCE [LARGE SCALE GENOMIC DNA]</scope>
    <source>
        <strain>ATCC 700930 / 2457T / Serotype 2a</strain>
    </source>
</reference>
<evidence type="ECO:0000250" key="1"/>
<evidence type="ECO:0000255" key="2"/>
<evidence type="ECO:0000305" key="3"/>
<feature type="chain" id="PRO_0000199028" description="NAD(P) transhydrogenase subunit beta">
    <location>
        <begin position="1"/>
        <end position="462"/>
    </location>
</feature>
<feature type="topological domain" description="Periplasmic" evidence="2">
    <location>
        <begin position="1"/>
        <end position="3"/>
    </location>
</feature>
<feature type="transmembrane region" description="Helical" evidence="2">
    <location>
        <begin position="4"/>
        <end position="24"/>
    </location>
</feature>
<feature type="topological domain" description="Cytoplasmic" evidence="2">
    <location>
        <begin position="25"/>
        <end position="45"/>
    </location>
</feature>
<feature type="transmembrane region" description="Helical" evidence="2">
    <location>
        <begin position="46"/>
        <end position="66"/>
    </location>
</feature>
<feature type="topological domain" description="Periplasmic" evidence="2">
    <location>
        <begin position="67"/>
        <end position="82"/>
    </location>
</feature>
<feature type="transmembrane region" description="Helical" evidence="2">
    <location>
        <begin position="83"/>
        <end position="103"/>
    </location>
</feature>
<feature type="topological domain" description="Cytoplasmic" evidence="2">
    <location>
        <begin position="104"/>
        <end position="115"/>
    </location>
</feature>
<feature type="transmembrane region" description="Helical" evidence="2">
    <location>
        <begin position="116"/>
        <end position="136"/>
    </location>
</feature>
<feature type="topological domain" description="Periplasmic" evidence="2">
    <location>
        <begin position="137"/>
        <end position="164"/>
    </location>
</feature>
<feature type="transmembrane region" description="Helical" evidence="2">
    <location>
        <begin position="165"/>
        <end position="185"/>
    </location>
</feature>
<feature type="topological domain" description="Cytoplasmic" evidence="2">
    <location>
        <begin position="186"/>
        <end position="188"/>
    </location>
</feature>
<feature type="transmembrane region" description="Helical" evidence="2">
    <location>
        <begin position="189"/>
        <end position="209"/>
    </location>
</feature>
<feature type="topological domain" description="Periplasmic" evidence="2">
    <location>
        <begin position="210"/>
        <end position="215"/>
    </location>
</feature>
<feature type="transmembrane region" description="Helical" evidence="2">
    <location>
        <begin position="216"/>
        <end position="236"/>
    </location>
</feature>
<feature type="topological domain" description="Cytoplasmic" evidence="2">
    <location>
        <begin position="237"/>
        <end position="239"/>
    </location>
</feature>
<feature type="transmembrane region" description="Helical" evidence="2">
    <location>
        <begin position="240"/>
        <end position="260"/>
    </location>
</feature>
<feature type="topological domain" description="Periplasmic" evidence="2">
    <location>
        <begin position="261"/>
        <end position="308"/>
    </location>
</feature>
<feature type="transmembrane region" description="Helical" evidence="2">
    <location>
        <begin position="309"/>
        <end position="329"/>
    </location>
</feature>
<feature type="topological domain" description="Cytoplasmic" evidence="2">
    <location>
        <begin position="330"/>
        <end position="462"/>
    </location>
</feature>
<organism>
    <name type="scientific">Shigella flexneri</name>
    <dbReference type="NCBI Taxonomy" id="623"/>
    <lineage>
        <taxon>Bacteria</taxon>
        <taxon>Pseudomonadati</taxon>
        <taxon>Pseudomonadota</taxon>
        <taxon>Gammaproteobacteria</taxon>
        <taxon>Enterobacterales</taxon>
        <taxon>Enterobacteriaceae</taxon>
        <taxon>Shigella</taxon>
    </lineage>
</organism>
<name>PNTB_SHIFL</name>
<proteinExistence type="inferred from homology"/>
<sequence>MSGGLVTAAYIVAAILFIFSLAGLSKHETSRQGNNFGIAGMAIALIATIFGPDTGNVGWILLAMVIGGAIGIRLAKKVEMTEMPELVAILHSFVGLAAVLVGFNSYLHHDAGMAPILVNIHLTEVFLGIFIGAVTFTGSVVAFGKLCGKISSKPLMLPNRHKMNLAALVVSFLLLIVFVRTDSVGLQVLALLIMTAIALVFGWHLVASIGGADMPVVVSMLNSYSGWAAAAAGFMLSNDLLIVTGALVGSSGAILSYIMCKAMNRSFISVIAGGFGTDGSSTGDDQEVGEHREITAEETAELLKNSHSVIITPGYGMAVAQAQYPVAEITEKLRARGINVRFGIHPVAGRLPGHMNVLLAEAKVPYDIVLEMDEINDDFADTDTVLVIGANDTVNPAAQDDPKSPIAGMPVLEVWKAQNVIVFKRSMNTGYAGVQNPLFFKENTHMLFGDAKASVDAILKAL</sequence>